<protein>
    <recommendedName>
        <fullName evidence="1">UPF0398 protein SaurJH9_1506</fullName>
    </recommendedName>
</protein>
<sequence length="187" mass="22191">MVKTVYVTGYKSFELNIFKDDAPEVHYLKQFIKHKIEQLLDEGLEWVLIQGQMGIELWTAEVVIELQRTYDSLKFAVITPFQGHTEKWNEHNQSKYANIIKHADYVDSIFHTSYQGPFQFKQADQFMLEHSDQTLLIYDEEQEASPKFFKQMLVDFMDKTNYTCDIVTFDELTAFINDLQWSEDQSF</sequence>
<gene>
    <name type="ordered locus">SaurJH9_1506</name>
</gene>
<accession>A5ISX7</accession>
<comment type="similarity">
    <text evidence="1">Belongs to the UPF0398 family.</text>
</comment>
<evidence type="ECO:0000255" key="1">
    <source>
        <dbReference type="HAMAP-Rule" id="MF_01575"/>
    </source>
</evidence>
<reference key="1">
    <citation type="submission" date="2007-05" db="EMBL/GenBank/DDBJ databases">
        <title>Complete sequence of chromosome of Staphylococcus aureus subsp. aureus JH9.</title>
        <authorList>
            <consortium name="US DOE Joint Genome Institute"/>
            <person name="Copeland A."/>
            <person name="Lucas S."/>
            <person name="Lapidus A."/>
            <person name="Barry K."/>
            <person name="Detter J.C."/>
            <person name="Glavina del Rio T."/>
            <person name="Hammon N."/>
            <person name="Israni S."/>
            <person name="Pitluck S."/>
            <person name="Chain P."/>
            <person name="Malfatti S."/>
            <person name="Shin M."/>
            <person name="Vergez L."/>
            <person name="Schmutz J."/>
            <person name="Larimer F."/>
            <person name="Land M."/>
            <person name="Hauser L."/>
            <person name="Kyrpides N."/>
            <person name="Kim E."/>
            <person name="Tomasz A."/>
            <person name="Richardson P."/>
        </authorList>
    </citation>
    <scope>NUCLEOTIDE SEQUENCE [LARGE SCALE GENOMIC DNA]</scope>
    <source>
        <strain>JH9</strain>
    </source>
</reference>
<proteinExistence type="inferred from homology"/>
<feature type="chain" id="PRO_1000087885" description="UPF0398 protein SaurJH9_1506">
    <location>
        <begin position="1"/>
        <end position="187"/>
    </location>
</feature>
<organism>
    <name type="scientific">Staphylococcus aureus (strain JH9)</name>
    <dbReference type="NCBI Taxonomy" id="359786"/>
    <lineage>
        <taxon>Bacteria</taxon>
        <taxon>Bacillati</taxon>
        <taxon>Bacillota</taxon>
        <taxon>Bacilli</taxon>
        <taxon>Bacillales</taxon>
        <taxon>Staphylococcaceae</taxon>
        <taxon>Staphylococcus</taxon>
    </lineage>
</organism>
<name>Y1506_STAA9</name>
<dbReference type="EMBL" id="CP000703">
    <property type="protein sequence ID" value="ABQ49300.1"/>
    <property type="molecule type" value="Genomic_DNA"/>
</dbReference>
<dbReference type="RefSeq" id="WP_000241308.1">
    <property type="nucleotide sequence ID" value="NC_009487.1"/>
</dbReference>
<dbReference type="SMR" id="A5ISX7"/>
<dbReference type="KEGG" id="saj:SaurJH9_1506"/>
<dbReference type="HOGENOM" id="CLU_105319_0_0_9"/>
<dbReference type="Gene3D" id="3.40.50.450">
    <property type="match status" value="1"/>
</dbReference>
<dbReference type="HAMAP" id="MF_01575">
    <property type="entry name" value="UPF0398"/>
    <property type="match status" value="1"/>
</dbReference>
<dbReference type="InterPro" id="IPR010697">
    <property type="entry name" value="YspA"/>
</dbReference>
<dbReference type="NCBIfam" id="NF010181">
    <property type="entry name" value="PRK13660.1"/>
    <property type="match status" value="1"/>
</dbReference>
<dbReference type="PANTHER" id="PTHR38440:SF1">
    <property type="entry name" value="UPF0398 PROTEIN SPR0331"/>
    <property type="match status" value="1"/>
</dbReference>
<dbReference type="PANTHER" id="PTHR38440">
    <property type="entry name" value="UPF0398 PROTEIN YPSA"/>
    <property type="match status" value="1"/>
</dbReference>
<dbReference type="Pfam" id="PF06908">
    <property type="entry name" value="YpsA"/>
    <property type="match status" value="1"/>
</dbReference>
<dbReference type="PIRSF" id="PIRSF021290">
    <property type="entry name" value="DUF1273"/>
    <property type="match status" value="1"/>
</dbReference>
<dbReference type="SUPFAM" id="SSF102405">
    <property type="entry name" value="MCP/YpsA-like"/>
    <property type="match status" value="1"/>
</dbReference>